<proteinExistence type="inferred from homology"/>
<organism>
    <name type="scientific">Pyrobaculum aerophilum (strain ATCC 51768 / DSM 7523 / JCM 9630 / CIP 104966 / NBRC 100827 / IM2)</name>
    <dbReference type="NCBI Taxonomy" id="178306"/>
    <lineage>
        <taxon>Archaea</taxon>
        <taxon>Thermoproteota</taxon>
        <taxon>Thermoprotei</taxon>
        <taxon>Thermoproteales</taxon>
        <taxon>Thermoproteaceae</taxon>
        <taxon>Pyrobaculum</taxon>
    </lineage>
</organism>
<sequence length="148" mass="16456">MICSQYGPVVVGWDGSKTFVNPSRCSKRVGLAEFLELINIDEIDKRLLYLLGIPRGYVTTYKLYAEVLGTSPRHVGWLMARNPLPVILPCHRVVKSDFSLGGYTGGVEVKKKLLAYEGALCGDRPCRVVRPRMIDDVRDALFKSLGLA</sequence>
<protein>
    <recommendedName>
        <fullName evidence="1">Methylated-DNA--protein-cysteine methyltransferase</fullName>
        <ecNumber evidence="1">2.1.1.63</ecNumber>
    </recommendedName>
    <alternativeName>
        <fullName evidence="1">6-O-methylguanine-DNA methyltransferase</fullName>
        <shortName evidence="1">MGMT</shortName>
    </alternativeName>
    <alternativeName>
        <fullName evidence="1">O-6-methylguanine-DNA-alkyltransferase</fullName>
    </alternativeName>
</protein>
<keyword id="KW-0963">Cytoplasm</keyword>
<keyword id="KW-0227">DNA damage</keyword>
<keyword id="KW-0234">DNA repair</keyword>
<keyword id="KW-0489">Methyltransferase</keyword>
<keyword id="KW-1185">Reference proteome</keyword>
<keyword id="KW-0808">Transferase</keyword>
<evidence type="ECO:0000250" key="1">
    <source>
        <dbReference type="UniProtKB" id="O74023"/>
    </source>
</evidence>
<accession>O93728</accession>
<reference key="1">
    <citation type="submission" date="2000-03" db="EMBL/GenBank/DDBJ databases">
        <authorList>
            <person name="Slupska M.M."/>
            <person name="Pedriquez L."/>
            <person name="Miller J.H."/>
        </authorList>
    </citation>
    <scope>NUCLEOTIDE SEQUENCE [GENOMIC DNA]</scope>
    <source>
        <strain>ATCC 51768 / DSM 7523 / JCM 9630 / CIP 104966 / NBRC 100827 / IM2</strain>
    </source>
</reference>
<reference key="2">
    <citation type="journal article" date="2002" name="Proc. Natl. Acad. Sci. U.S.A.">
        <title>Genome sequence of the hyperthermophilic crenarchaeon Pyrobaculum aerophilum.</title>
        <authorList>
            <person name="Fitz-Gibbon S.T."/>
            <person name="Ladner H."/>
            <person name="Kim U.-J."/>
            <person name="Stetter K.O."/>
            <person name="Simon M.I."/>
            <person name="Miller J.H."/>
        </authorList>
    </citation>
    <scope>NUCLEOTIDE SEQUENCE [LARGE SCALE GENOMIC DNA]</scope>
    <source>
        <strain>ATCC 51768 / DSM 7523 / JCM 9630 / CIP 104966 / NBRC 100827 / IM2</strain>
    </source>
</reference>
<feature type="chain" id="PRO_0000139382" description="Methylated-DNA--protein-cysteine methyltransferase">
    <location>
        <begin position="1"/>
        <end position="148"/>
    </location>
</feature>
<feature type="active site" description="Nucleophile; methyl group acceptor" evidence="1">
    <location>
        <position position="90"/>
    </location>
</feature>
<dbReference type="EC" id="2.1.1.63" evidence="1"/>
<dbReference type="EMBL" id="U82384">
    <property type="protein sequence ID" value="AAD09231.2"/>
    <property type="molecule type" value="Genomic_DNA"/>
</dbReference>
<dbReference type="EMBL" id="AE009441">
    <property type="protein sequence ID" value="AAL63882.1"/>
    <property type="molecule type" value="Genomic_DNA"/>
</dbReference>
<dbReference type="RefSeq" id="WP_011008353.1">
    <property type="nucleotide sequence ID" value="NC_003364.1"/>
</dbReference>
<dbReference type="SMR" id="O93728"/>
<dbReference type="STRING" id="178306.PAE2012"/>
<dbReference type="EnsemblBacteria" id="AAL63882">
    <property type="protein sequence ID" value="AAL63882"/>
    <property type="gene ID" value="PAE2012"/>
</dbReference>
<dbReference type="GeneID" id="1464205"/>
<dbReference type="KEGG" id="pai:PAE2012"/>
<dbReference type="PATRIC" id="fig|178306.9.peg.1487"/>
<dbReference type="eggNOG" id="arCOG02724">
    <property type="taxonomic scope" value="Archaea"/>
</dbReference>
<dbReference type="HOGENOM" id="CLU_1754770_0_0_2"/>
<dbReference type="InParanoid" id="O93728"/>
<dbReference type="Proteomes" id="UP000002439">
    <property type="component" value="Chromosome"/>
</dbReference>
<dbReference type="GO" id="GO:0005737">
    <property type="term" value="C:cytoplasm"/>
    <property type="evidence" value="ECO:0007669"/>
    <property type="project" value="UniProtKB-SubCell"/>
</dbReference>
<dbReference type="GO" id="GO:0003908">
    <property type="term" value="F:methylated-DNA-[protein]-cysteine S-methyltransferase activity"/>
    <property type="evidence" value="ECO:0007669"/>
    <property type="project" value="UniProtKB-EC"/>
</dbReference>
<dbReference type="GO" id="GO:0006281">
    <property type="term" value="P:DNA repair"/>
    <property type="evidence" value="ECO:0007669"/>
    <property type="project" value="UniProtKB-KW"/>
</dbReference>
<dbReference type="GO" id="GO:0032259">
    <property type="term" value="P:methylation"/>
    <property type="evidence" value="ECO:0007669"/>
    <property type="project" value="UniProtKB-KW"/>
</dbReference>
<dbReference type="CDD" id="cd06445">
    <property type="entry name" value="ATase"/>
    <property type="match status" value="1"/>
</dbReference>
<dbReference type="Gene3D" id="1.10.10.10">
    <property type="entry name" value="Winged helix-like DNA-binding domain superfamily/Winged helix DNA-binding domain"/>
    <property type="match status" value="1"/>
</dbReference>
<dbReference type="InterPro" id="IPR001497">
    <property type="entry name" value="MethylDNA_cys_MeTrfase_AS"/>
</dbReference>
<dbReference type="InterPro" id="IPR014048">
    <property type="entry name" value="MethylDNA_cys_MeTrfase_DNA-bd"/>
</dbReference>
<dbReference type="InterPro" id="IPR036217">
    <property type="entry name" value="MethylDNA_cys_MeTrfase_DNAb"/>
</dbReference>
<dbReference type="InterPro" id="IPR036388">
    <property type="entry name" value="WH-like_DNA-bd_sf"/>
</dbReference>
<dbReference type="NCBIfam" id="TIGR00589">
    <property type="entry name" value="ogt"/>
    <property type="match status" value="1"/>
</dbReference>
<dbReference type="PANTHER" id="PTHR10815">
    <property type="entry name" value="METHYLATED-DNA--PROTEIN-CYSTEINE METHYLTRANSFERASE"/>
    <property type="match status" value="1"/>
</dbReference>
<dbReference type="PANTHER" id="PTHR10815:SF13">
    <property type="entry name" value="METHYLATED-DNA--PROTEIN-CYSTEINE METHYLTRANSFERASE"/>
    <property type="match status" value="1"/>
</dbReference>
<dbReference type="Pfam" id="PF01035">
    <property type="entry name" value="DNA_binding_1"/>
    <property type="match status" value="1"/>
</dbReference>
<dbReference type="SUPFAM" id="SSF46767">
    <property type="entry name" value="Methylated DNA-protein cysteine methyltransferase, C-terminal domain"/>
    <property type="match status" value="1"/>
</dbReference>
<dbReference type="PROSITE" id="PS00374">
    <property type="entry name" value="MGMT"/>
    <property type="match status" value="1"/>
</dbReference>
<gene>
    <name type="primary">ogt</name>
    <name type="ordered locus">PAE2012</name>
</gene>
<comment type="function">
    <text evidence="1">Involved in the cellular defense against the biological effects of O6-methylguanine (O6-MeG) and O4-methylthymine (O4-MeT) in DNA. Repairs the methylated nucleobase in DNA by stoichiometrically transferring the methyl group to a cysteine residue in the enzyme. This is a suicide reaction: the enzyme is irreversibly inactivated.</text>
</comment>
<comment type="catalytic activity">
    <reaction evidence="1">
        <text>a 6-O-methyl-2'-deoxyguanosine in DNA + L-cysteinyl-[protein] = S-methyl-L-cysteinyl-[protein] + a 2'-deoxyguanosine in DNA</text>
        <dbReference type="Rhea" id="RHEA:24000"/>
        <dbReference type="Rhea" id="RHEA-COMP:10131"/>
        <dbReference type="Rhea" id="RHEA-COMP:10132"/>
        <dbReference type="Rhea" id="RHEA-COMP:11367"/>
        <dbReference type="Rhea" id="RHEA-COMP:11368"/>
        <dbReference type="ChEBI" id="CHEBI:29950"/>
        <dbReference type="ChEBI" id="CHEBI:82612"/>
        <dbReference type="ChEBI" id="CHEBI:85445"/>
        <dbReference type="ChEBI" id="CHEBI:85448"/>
        <dbReference type="EC" id="2.1.1.63"/>
    </reaction>
</comment>
<comment type="catalytic activity">
    <reaction evidence="1">
        <text>a 4-O-methyl-thymidine in DNA + L-cysteinyl-[protein] = a thymidine in DNA + S-methyl-L-cysteinyl-[protein]</text>
        <dbReference type="Rhea" id="RHEA:53428"/>
        <dbReference type="Rhea" id="RHEA-COMP:10131"/>
        <dbReference type="Rhea" id="RHEA-COMP:10132"/>
        <dbReference type="Rhea" id="RHEA-COMP:13555"/>
        <dbReference type="Rhea" id="RHEA-COMP:13556"/>
        <dbReference type="ChEBI" id="CHEBI:29950"/>
        <dbReference type="ChEBI" id="CHEBI:82612"/>
        <dbReference type="ChEBI" id="CHEBI:137386"/>
        <dbReference type="ChEBI" id="CHEBI:137387"/>
        <dbReference type="EC" id="2.1.1.63"/>
    </reaction>
</comment>
<comment type="subcellular location">
    <subcellularLocation>
        <location evidence="1">Cytoplasm</location>
    </subcellularLocation>
</comment>
<comment type="miscellaneous">
    <text evidence="1">This enzyme catalyzes only one turnover and therefore is not strictly catalytic. According to one definition, an enzyme is a biocatalyst that acts repeatedly and over many reaction cycles.</text>
</comment>
<comment type="similarity">
    <text evidence="1">Belongs to the MGMT family.</text>
</comment>
<name>OGT_PYRAE</name>